<dbReference type="EC" id="5.2.1.8"/>
<dbReference type="EMBL" id="AF337909">
    <property type="protein sequence ID" value="AAM15770.1"/>
    <property type="molecule type" value="mRNA"/>
</dbReference>
<dbReference type="EMBL" id="AK025694">
    <property type="protein sequence ID" value="BAB15220.1"/>
    <property type="status" value="ALT_INIT"/>
    <property type="molecule type" value="mRNA"/>
</dbReference>
<dbReference type="EMBL" id="AK025874">
    <property type="protein sequence ID" value="BAB15266.1"/>
    <property type="molecule type" value="mRNA"/>
</dbReference>
<dbReference type="EMBL" id="AB045981">
    <property type="protein sequence ID" value="BAB20974.1"/>
    <property type="molecule type" value="mRNA"/>
</dbReference>
<dbReference type="EMBL" id="BX537452">
    <property type="protein sequence ID" value="CAD97695.1"/>
    <property type="status" value="ALT_INIT"/>
    <property type="molecule type" value="mRNA"/>
</dbReference>
<dbReference type="EMBL" id="AL133116">
    <property type="protein sequence ID" value="CAB61418.1"/>
    <property type="molecule type" value="mRNA"/>
</dbReference>
<dbReference type="EMBL" id="AC091172">
    <property type="status" value="NOT_ANNOTATED_CDS"/>
    <property type="molecule type" value="Genomic_DNA"/>
</dbReference>
<dbReference type="EMBL" id="BC016467">
    <property type="protein sequence ID" value="AAH16467.1"/>
    <property type="molecule type" value="mRNA"/>
</dbReference>
<dbReference type="CCDS" id="CCDS11409.1">
    <molecule id="Q96AY3-1"/>
</dbReference>
<dbReference type="PIR" id="T42709">
    <property type="entry name" value="T42709"/>
</dbReference>
<dbReference type="RefSeq" id="NP_068758.3">
    <molecule id="Q96AY3-1"/>
    <property type="nucleotide sequence ID" value="NM_021939.3"/>
</dbReference>
<dbReference type="SMR" id="Q96AY3"/>
<dbReference type="BioGRID" id="121955">
    <property type="interactions" value="117"/>
</dbReference>
<dbReference type="CORUM" id="Q96AY3"/>
<dbReference type="FunCoup" id="Q96AY3">
    <property type="interactions" value="302"/>
</dbReference>
<dbReference type="IntAct" id="Q96AY3">
    <property type="interactions" value="29"/>
</dbReference>
<dbReference type="MINT" id="Q96AY3"/>
<dbReference type="STRING" id="9606.ENSP00000317232"/>
<dbReference type="DrugCentral" id="Q96AY3"/>
<dbReference type="GlyConnect" id="1597">
    <property type="glycosylation" value="12 N-Linked glycans (6 sites)"/>
</dbReference>
<dbReference type="GlyCosmos" id="Q96AY3">
    <property type="glycosylation" value="7 sites, 13 glycans"/>
</dbReference>
<dbReference type="GlyGen" id="Q96AY3">
    <property type="glycosylation" value="9 sites, 52 N-linked glycans (7 sites), 1 O-linked glycan (2 sites)"/>
</dbReference>
<dbReference type="iPTMnet" id="Q96AY3"/>
<dbReference type="MetOSite" id="Q96AY3"/>
<dbReference type="PhosphoSitePlus" id="Q96AY3"/>
<dbReference type="SwissPalm" id="Q96AY3"/>
<dbReference type="BioMuta" id="FKBP10"/>
<dbReference type="DMDM" id="23396594"/>
<dbReference type="jPOST" id="Q96AY3"/>
<dbReference type="MassIVE" id="Q96AY3"/>
<dbReference type="PaxDb" id="9606-ENSP00000317232"/>
<dbReference type="PeptideAtlas" id="Q96AY3"/>
<dbReference type="ProteomicsDB" id="76020">
    <molecule id="Q96AY3-1"/>
</dbReference>
<dbReference type="ProteomicsDB" id="80989"/>
<dbReference type="Pumba" id="Q96AY3"/>
<dbReference type="TopDownProteomics" id="Q96AY3-1">
    <molecule id="Q96AY3-1"/>
</dbReference>
<dbReference type="Antibodypedia" id="28953">
    <property type="antibodies" value="279 antibodies from 31 providers"/>
</dbReference>
<dbReference type="DNASU" id="60681"/>
<dbReference type="Ensembl" id="ENST00000321562.9">
    <molecule id="Q96AY3-1"/>
    <property type="protein sequence ID" value="ENSP00000317232.4"/>
    <property type="gene ID" value="ENSG00000141756.20"/>
</dbReference>
<dbReference type="GeneID" id="60681"/>
<dbReference type="KEGG" id="hsa:60681"/>
<dbReference type="MANE-Select" id="ENST00000321562.9">
    <property type="protein sequence ID" value="ENSP00000317232.4"/>
    <property type="RefSeq nucleotide sequence ID" value="NM_021939.4"/>
    <property type="RefSeq protein sequence ID" value="NP_068758.3"/>
</dbReference>
<dbReference type="UCSC" id="uc002hxv.3">
    <molecule id="Q96AY3-1"/>
    <property type="organism name" value="human"/>
</dbReference>
<dbReference type="AGR" id="HGNC:18169"/>
<dbReference type="CTD" id="60681"/>
<dbReference type="DisGeNET" id="60681"/>
<dbReference type="GeneCards" id="FKBP10"/>
<dbReference type="HGNC" id="HGNC:18169">
    <property type="gene designation" value="FKBP10"/>
</dbReference>
<dbReference type="HPA" id="ENSG00000141756">
    <property type="expression patterns" value="Low tissue specificity"/>
</dbReference>
<dbReference type="MalaCards" id="FKBP10"/>
<dbReference type="MIM" id="259450">
    <property type="type" value="phenotype"/>
</dbReference>
<dbReference type="MIM" id="607063">
    <property type="type" value="gene"/>
</dbReference>
<dbReference type="MIM" id="610968">
    <property type="type" value="phenotype"/>
</dbReference>
<dbReference type="neXtProt" id="NX_Q96AY3"/>
<dbReference type="OpenTargets" id="ENSG00000141756"/>
<dbReference type="Orphanet" id="2771">
    <property type="disease" value="Bruck syndrome"/>
</dbReference>
<dbReference type="Orphanet" id="1149">
    <property type="disease" value="Kuskokwim syndrome"/>
</dbReference>
<dbReference type="Orphanet" id="216812">
    <property type="disease" value="Osteogenesis imperfecta type 3"/>
</dbReference>
<dbReference type="Orphanet" id="216820">
    <property type="disease" value="Osteogenesis imperfecta type 4"/>
</dbReference>
<dbReference type="PharmGKB" id="PA28152"/>
<dbReference type="VEuPathDB" id="HostDB:ENSG00000141756"/>
<dbReference type="eggNOG" id="KOG0549">
    <property type="taxonomic scope" value="Eukaryota"/>
</dbReference>
<dbReference type="GeneTree" id="ENSGT00940000156331"/>
<dbReference type="HOGENOM" id="CLU_034907_0_0_1"/>
<dbReference type="InParanoid" id="Q96AY3"/>
<dbReference type="OMA" id="YDRHTLV"/>
<dbReference type="OrthoDB" id="1902587at2759"/>
<dbReference type="PAN-GO" id="Q96AY3">
    <property type="GO annotations" value="3 GO annotations based on evolutionary models"/>
</dbReference>
<dbReference type="PhylomeDB" id="Q96AY3"/>
<dbReference type="TreeFam" id="TF105296"/>
<dbReference type="PathwayCommons" id="Q96AY3"/>
<dbReference type="SignaLink" id="Q96AY3"/>
<dbReference type="BioGRID-ORCS" id="60681">
    <property type="hits" value="18 hits in 1156 CRISPR screens"/>
</dbReference>
<dbReference type="ChiTaRS" id="FKBP10">
    <property type="organism name" value="human"/>
</dbReference>
<dbReference type="GenomeRNAi" id="60681"/>
<dbReference type="Pharos" id="Q96AY3">
    <property type="development level" value="Tbio"/>
</dbReference>
<dbReference type="PRO" id="PR:Q96AY3"/>
<dbReference type="Proteomes" id="UP000005640">
    <property type="component" value="Chromosome 17"/>
</dbReference>
<dbReference type="RNAct" id="Q96AY3">
    <property type="molecule type" value="protein"/>
</dbReference>
<dbReference type="Bgee" id="ENSG00000141756">
    <property type="expression patterns" value="Expressed in stromal cell of endometrium and 108 other cell types or tissues"/>
</dbReference>
<dbReference type="ExpressionAtlas" id="Q96AY3">
    <property type="expression patterns" value="baseline and differential"/>
</dbReference>
<dbReference type="GO" id="GO:0005783">
    <property type="term" value="C:endoplasmic reticulum"/>
    <property type="evidence" value="ECO:0000314"/>
    <property type="project" value="MGI"/>
</dbReference>
<dbReference type="GO" id="GO:0005788">
    <property type="term" value="C:endoplasmic reticulum lumen"/>
    <property type="evidence" value="ECO:0007669"/>
    <property type="project" value="UniProtKB-SubCell"/>
</dbReference>
<dbReference type="GO" id="GO:0016020">
    <property type="term" value="C:membrane"/>
    <property type="evidence" value="ECO:0007669"/>
    <property type="project" value="Ensembl"/>
</dbReference>
<dbReference type="GO" id="GO:0005758">
    <property type="term" value="C:mitochondrial intermembrane space"/>
    <property type="evidence" value="ECO:0007669"/>
    <property type="project" value="Ensembl"/>
</dbReference>
<dbReference type="GO" id="GO:0005509">
    <property type="term" value="F:calcium ion binding"/>
    <property type="evidence" value="ECO:0007669"/>
    <property type="project" value="InterPro"/>
</dbReference>
<dbReference type="GO" id="GO:0005528">
    <property type="term" value="F:FK506 binding"/>
    <property type="evidence" value="ECO:0000250"/>
    <property type="project" value="FlyBase"/>
</dbReference>
<dbReference type="GO" id="GO:0003755">
    <property type="term" value="F:peptidyl-prolyl cis-trans isomerase activity"/>
    <property type="evidence" value="ECO:0000250"/>
    <property type="project" value="FlyBase"/>
</dbReference>
<dbReference type="GO" id="GO:0035909">
    <property type="term" value="P:aorta morphogenesis"/>
    <property type="evidence" value="ECO:0007669"/>
    <property type="project" value="Ensembl"/>
</dbReference>
<dbReference type="GO" id="GO:0030199">
    <property type="term" value="P:collagen fibril organization"/>
    <property type="evidence" value="ECO:0007669"/>
    <property type="project" value="Ensembl"/>
</dbReference>
<dbReference type="GO" id="GO:0085029">
    <property type="term" value="P:extracellular matrix assembly"/>
    <property type="evidence" value="ECO:0007669"/>
    <property type="project" value="Ensembl"/>
</dbReference>
<dbReference type="GO" id="GO:0001701">
    <property type="term" value="P:in utero embryonic development"/>
    <property type="evidence" value="ECO:0007669"/>
    <property type="project" value="Ensembl"/>
</dbReference>
<dbReference type="GO" id="GO:0006457">
    <property type="term" value="P:protein folding"/>
    <property type="evidence" value="ECO:0000318"/>
    <property type="project" value="GO_Central"/>
</dbReference>
<dbReference type="GO" id="GO:0042060">
    <property type="term" value="P:wound healing"/>
    <property type="evidence" value="ECO:0007669"/>
    <property type="project" value="Ensembl"/>
</dbReference>
<dbReference type="CDD" id="cd00051">
    <property type="entry name" value="EFh"/>
    <property type="match status" value="1"/>
</dbReference>
<dbReference type="FunFam" id="3.10.50.40:FF:000002">
    <property type="entry name" value="Peptidylprolyl isomerase"/>
    <property type="match status" value="4"/>
</dbReference>
<dbReference type="Gene3D" id="3.10.50.40">
    <property type="match status" value="4"/>
</dbReference>
<dbReference type="Gene3D" id="1.10.238.10">
    <property type="entry name" value="EF-hand"/>
    <property type="match status" value="1"/>
</dbReference>
<dbReference type="InterPro" id="IPR011992">
    <property type="entry name" value="EF-hand-dom_pair"/>
</dbReference>
<dbReference type="InterPro" id="IPR018247">
    <property type="entry name" value="EF_Hand_1_Ca_BS"/>
</dbReference>
<dbReference type="InterPro" id="IPR002048">
    <property type="entry name" value="EF_hand_dom"/>
</dbReference>
<dbReference type="InterPro" id="IPR051989">
    <property type="entry name" value="FKBP-like_isomerase"/>
</dbReference>
<dbReference type="InterPro" id="IPR046357">
    <property type="entry name" value="PPIase_dom_sf"/>
</dbReference>
<dbReference type="InterPro" id="IPR001179">
    <property type="entry name" value="PPIase_FKBP_dom"/>
</dbReference>
<dbReference type="PANTHER" id="PTHR46046:SF3">
    <property type="entry name" value="PEPTIDYL-PROLYL CIS-TRANS ISOMERASE FKBP10"/>
    <property type="match status" value="1"/>
</dbReference>
<dbReference type="PANTHER" id="PTHR46046">
    <property type="entry name" value="PEPTIDYLPROLYL ISOMERASE"/>
    <property type="match status" value="1"/>
</dbReference>
<dbReference type="Pfam" id="PF13202">
    <property type="entry name" value="EF-hand_5"/>
    <property type="match status" value="2"/>
</dbReference>
<dbReference type="Pfam" id="PF00254">
    <property type="entry name" value="FKBP_C"/>
    <property type="match status" value="4"/>
</dbReference>
<dbReference type="SMART" id="SM00054">
    <property type="entry name" value="EFh"/>
    <property type="match status" value="2"/>
</dbReference>
<dbReference type="SUPFAM" id="SSF47473">
    <property type="entry name" value="EF-hand"/>
    <property type="match status" value="1"/>
</dbReference>
<dbReference type="SUPFAM" id="SSF54534">
    <property type="entry name" value="FKBP-like"/>
    <property type="match status" value="4"/>
</dbReference>
<dbReference type="PROSITE" id="PS00018">
    <property type="entry name" value="EF_HAND_1"/>
    <property type="match status" value="1"/>
</dbReference>
<dbReference type="PROSITE" id="PS50222">
    <property type="entry name" value="EF_HAND_2"/>
    <property type="match status" value="2"/>
</dbReference>
<dbReference type="PROSITE" id="PS00014">
    <property type="entry name" value="ER_TARGET"/>
    <property type="match status" value="1"/>
</dbReference>
<dbReference type="PROSITE" id="PS50059">
    <property type="entry name" value="FKBP_PPIASE"/>
    <property type="match status" value="4"/>
</dbReference>
<gene>
    <name type="primary">FKBP10</name>
    <name type="synonym">FKBP65</name>
    <name type="ORF">PSEC0056</name>
</gene>
<reference key="1">
    <citation type="submission" date="2001-01" db="EMBL/GenBank/DDBJ databases">
        <title>The human FK506-binding protein repertoire.</title>
        <authorList>
            <person name="Rulten S."/>
            <person name="Kinloch R.A."/>
            <person name="Robinson C."/>
            <person name="Gettins L."/>
            <person name="Kay J.E."/>
        </authorList>
    </citation>
    <scope>NUCLEOTIDE SEQUENCE [MRNA] (ISOFORM 1)</scope>
    <source>
        <tissue>Brain</tissue>
    </source>
</reference>
<reference key="2">
    <citation type="journal article" date="2004" name="Nat. Genet.">
        <title>Complete sequencing and characterization of 21,243 full-length human cDNAs.</title>
        <authorList>
            <person name="Ota T."/>
            <person name="Suzuki Y."/>
            <person name="Nishikawa T."/>
            <person name="Otsuki T."/>
            <person name="Sugiyama T."/>
            <person name="Irie R."/>
            <person name="Wakamatsu A."/>
            <person name="Hayashi K."/>
            <person name="Sato H."/>
            <person name="Nagai K."/>
            <person name="Kimura K."/>
            <person name="Makita H."/>
            <person name="Sekine M."/>
            <person name="Obayashi M."/>
            <person name="Nishi T."/>
            <person name="Shibahara T."/>
            <person name="Tanaka T."/>
            <person name="Ishii S."/>
            <person name="Yamamoto J."/>
            <person name="Saito K."/>
            <person name="Kawai Y."/>
            <person name="Isono Y."/>
            <person name="Nakamura Y."/>
            <person name="Nagahari K."/>
            <person name="Murakami K."/>
            <person name="Yasuda T."/>
            <person name="Iwayanagi T."/>
            <person name="Wagatsuma M."/>
            <person name="Shiratori A."/>
            <person name="Sudo H."/>
            <person name="Hosoiri T."/>
            <person name="Kaku Y."/>
            <person name="Kodaira H."/>
            <person name="Kondo H."/>
            <person name="Sugawara M."/>
            <person name="Takahashi M."/>
            <person name="Kanda K."/>
            <person name="Yokoi T."/>
            <person name="Furuya T."/>
            <person name="Kikkawa E."/>
            <person name="Omura Y."/>
            <person name="Abe K."/>
            <person name="Kamihara K."/>
            <person name="Katsuta N."/>
            <person name="Sato K."/>
            <person name="Tanikawa M."/>
            <person name="Yamazaki M."/>
            <person name="Ninomiya K."/>
            <person name="Ishibashi T."/>
            <person name="Yamashita H."/>
            <person name="Murakawa K."/>
            <person name="Fujimori K."/>
            <person name="Tanai H."/>
            <person name="Kimata M."/>
            <person name="Watanabe M."/>
            <person name="Hiraoka S."/>
            <person name="Chiba Y."/>
            <person name="Ishida S."/>
            <person name="Ono Y."/>
            <person name="Takiguchi S."/>
            <person name="Watanabe S."/>
            <person name="Yosida M."/>
            <person name="Hotuta T."/>
            <person name="Kusano J."/>
            <person name="Kanehori K."/>
            <person name="Takahashi-Fujii A."/>
            <person name="Hara H."/>
            <person name="Tanase T.-O."/>
            <person name="Nomura Y."/>
            <person name="Togiya S."/>
            <person name="Komai F."/>
            <person name="Hara R."/>
            <person name="Takeuchi K."/>
            <person name="Arita M."/>
            <person name="Imose N."/>
            <person name="Musashino K."/>
            <person name="Yuuki H."/>
            <person name="Oshima A."/>
            <person name="Sasaki N."/>
            <person name="Aotsuka S."/>
            <person name="Yoshikawa Y."/>
            <person name="Matsunawa H."/>
            <person name="Ichihara T."/>
            <person name="Shiohata N."/>
            <person name="Sano S."/>
            <person name="Moriya S."/>
            <person name="Momiyama H."/>
            <person name="Satoh N."/>
            <person name="Takami S."/>
            <person name="Terashima Y."/>
            <person name="Suzuki O."/>
            <person name="Nakagawa S."/>
            <person name="Senoh A."/>
            <person name="Mizoguchi H."/>
            <person name="Goto Y."/>
            <person name="Shimizu F."/>
            <person name="Wakebe H."/>
            <person name="Hishigaki H."/>
            <person name="Watanabe T."/>
            <person name="Sugiyama A."/>
            <person name="Takemoto M."/>
            <person name="Kawakami B."/>
            <person name="Yamazaki M."/>
            <person name="Watanabe K."/>
            <person name="Kumagai A."/>
            <person name="Itakura S."/>
            <person name="Fukuzumi Y."/>
            <person name="Fujimori Y."/>
            <person name="Komiyama M."/>
            <person name="Tashiro H."/>
            <person name="Tanigami A."/>
            <person name="Fujiwara T."/>
            <person name="Ono T."/>
            <person name="Yamada K."/>
            <person name="Fujii Y."/>
            <person name="Ozaki K."/>
            <person name="Hirao M."/>
            <person name="Ohmori Y."/>
            <person name="Kawabata A."/>
            <person name="Hikiji T."/>
            <person name="Kobatake N."/>
            <person name="Inagaki H."/>
            <person name="Ikema Y."/>
            <person name="Okamoto S."/>
            <person name="Okitani R."/>
            <person name="Kawakami T."/>
            <person name="Noguchi S."/>
            <person name="Itoh T."/>
            <person name="Shigeta K."/>
            <person name="Senba T."/>
            <person name="Matsumura K."/>
            <person name="Nakajima Y."/>
            <person name="Mizuno T."/>
            <person name="Morinaga M."/>
            <person name="Sasaki M."/>
            <person name="Togashi T."/>
            <person name="Oyama M."/>
            <person name="Hata H."/>
            <person name="Watanabe M."/>
            <person name="Komatsu T."/>
            <person name="Mizushima-Sugano J."/>
            <person name="Satoh T."/>
            <person name="Shirai Y."/>
            <person name="Takahashi Y."/>
            <person name="Nakagawa K."/>
            <person name="Okumura K."/>
            <person name="Nagase T."/>
            <person name="Nomura N."/>
            <person name="Kikuchi H."/>
            <person name="Masuho Y."/>
            <person name="Yamashita R."/>
            <person name="Nakai K."/>
            <person name="Yada T."/>
            <person name="Nakamura Y."/>
            <person name="Ohara O."/>
            <person name="Isogai T."/>
            <person name="Sugano S."/>
        </authorList>
    </citation>
    <scope>NUCLEOTIDE SEQUENCE [LARGE SCALE MRNA] (ISOFORM 2)</scope>
    <scope>NUCLEOTIDE SEQUENCE [LARGE SCALE MRNA] OF 82-582 (ISOFORM 1)</scope>
</reference>
<reference key="3">
    <citation type="journal article" date="2005" name="DNA Res.">
        <title>Signal sequence and keyword trap in silico for selection of full-length human cDNAs encoding secretion or membrane proteins from oligo-capped cDNA libraries.</title>
        <authorList>
            <person name="Otsuki T."/>
            <person name="Ota T."/>
            <person name="Nishikawa T."/>
            <person name="Hayashi K."/>
            <person name="Suzuki Y."/>
            <person name="Yamamoto J."/>
            <person name="Wakamatsu A."/>
            <person name="Kimura K."/>
            <person name="Sakamoto K."/>
            <person name="Hatano N."/>
            <person name="Kawai Y."/>
            <person name="Ishii S."/>
            <person name="Saito K."/>
            <person name="Kojima S."/>
            <person name="Sugiyama T."/>
            <person name="Ono T."/>
            <person name="Okano K."/>
            <person name="Yoshikawa Y."/>
            <person name="Aotsuka S."/>
            <person name="Sasaki N."/>
            <person name="Hattori A."/>
            <person name="Okumura K."/>
            <person name="Nagai K."/>
            <person name="Sugano S."/>
            <person name="Isogai T."/>
        </authorList>
    </citation>
    <scope>NUCLEOTIDE SEQUENCE [LARGE SCALE MRNA] (ISOFORM 1)</scope>
    <source>
        <tissue>Teratocarcinoma</tissue>
    </source>
</reference>
<reference key="4">
    <citation type="journal article" date="2007" name="BMC Genomics">
        <title>The full-ORF clone resource of the German cDNA consortium.</title>
        <authorList>
            <person name="Bechtel S."/>
            <person name="Rosenfelder H."/>
            <person name="Duda A."/>
            <person name="Schmidt C.P."/>
            <person name="Ernst U."/>
            <person name="Wellenreuther R."/>
            <person name="Mehrle A."/>
            <person name="Schuster C."/>
            <person name="Bahr A."/>
            <person name="Bloecker H."/>
            <person name="Heubner D."/>
            <person name="Hoerlein A."/>
            <person name="Michel G."/>
            <person name="Wedler H."/>
            <person name="Koehrer K."/>
            <person name="Ottenwaelder B."/>
            <person name="Poustka A."/>
            <person name="Wiemann S."/>
            <person name="Schupp I."/>
        </authorList>
    </citation>
    <scope>NUCLEOTIDE SEQUENCE [LARGE SCALE MRNA] (ISOFORM 1)</scope>
    <source>
        <tissue>Endometrial tumor</tissue>
        <tissue>Uterus</tissue>
    </source>
</reference>
<reference key="5">
    <citation type="journal article" date="2006" name="Nature">
        <title>DNA sequence of human chromosome 17 and analysis of rearrangement in the human lineage.</title>
        <authorList>
            <person name="Zody M.C."/>
            <person name="Garber M."/>
            <person name="Adams D.J."/>
            <person name="Sharpe T."/>
            <person name="Harrow J."/>
            <person name="Lupski J.R."/>
            <person name="Nicholson C."/>
            <person name="Searle S.M."/>
            <person name="Wilming L."/>
            <person name="Young S.K."/>
            <person name="Abouelleil A."/>
            <person name="Allen N.R."/>
            <person name="Bi W."/>
            <person name="Bloom T."/>
            <person name="Borowsky M.L."/>
            <person name="Bugalter B.E."/>
            <person name="Butler J."/>
            <person name="Chang J.L."/>
            <person name="Chen C.-K."/>
            <person name="Cook A."/>
            <person name="Corum B."/>
            <person name="Cuomo C.A."/>
            <person name="de Jong P.J."/>
            <person name="DeCaprio D."/>
            <person name="Dewar K."/>
            <person name="FitzGerald M."/>
            <person name="Gilbert J."/>
            <person name="Gibson R."/>
            <person name="Gnerre S."/>
            <person name="Goldstein S."/>
            <person name="Grafham D.V."/>
            <person name="Grocock R."/>
            <person name="Hafez N."/>
            <person name="Hagopian D.S."/>
            <person name="Hart E."/>
            <person name="Norman C.H."/>
            <person name="Humphray S."/>
            <person name="Jaffe D.B."/>
            <person name="Jones M."/>
            <person name="Kamal M."/>
            <person name="Khodiyar V.K."/>
            <person name="LaButti K."/>
            <person name="Laird G."/>
            <person name="Lehoczky J."/>
            <person name="Liu X."/>
            <person name="Lokyitsang T."/>
            <person name="Loveland J."/>
            <person name="Lui A."/>
            <person name="Macdonald P."/>
            <person name="Major J.E."/>
            <person name="Matthews L."/>
            <person name="Mauceli E."/>
            <person name="McCarroll S.A."/>
            <person name="Mihalev A.H."/>
            <person name="Mudge J."/>
            <person name="Nguyen C."/>
            <person name="Nicol R."/>
            <person name="O'Leary S.B."/>
            <person name="Osoegawa K."/>
            <person name="Schwartz D.C."/>
            <person name="Shaw-Smith C."/>
            <person name="Stankiewicz P."/>
            <person name="Steward C."/>
            <person name="Swarbreck D."/>
            <person name="Venkataraman V."/>
            <person name="Whittaker C.A."/>
            <person name="Yang X."/>
            <person name="Zimmer A.R."/>
            <person name="Bradley A."/>
            <person name="Hubbard T."/>
            <person name="Birren B.W."/>
            <person name="Rogers J."/>
            <person name="Lander E.S."/>
            <person name="Nusbaum C."/>
        </authorList>
    </citation>
    <scope>NUCLEOTIDE SEQUENCE [LARGE SCALE GENOMIC DNA]</scope>
</reference>
<reference key="6">
    <citation type="journal article" date="2004" name="Genome Res.">
        <title>The status, quality, and expansion of the NIH full-length cDNA project: the Mammalian Gene Collection (MGC).</title>
        <authorList>
            <consortium name="The MGC Project Team"/>
        </authorList>
    </citation>
    <scope>NUCLEOTIDE SEQUENCE [LARGE SCALE MRNA] (ISOFORM 1)</scope>
    <source>
        <tissue>Brain</tissue>
    </source>
</reference>
<reference key="7">
    <citation type="journal article" date="2003" name="Nat. Biotechnol.">
        <title>Identification and quantification of N-linked glycoproteins using hydrazide chemistry, stable isotope labeling and mass spectrometry.</title>
        <authorList>
            <person name="Zhang H."/>
            <person name="Li X.-J."/>
            <person name="Martin D.B."/>
            <person name="Aebersold R."/>
        </authorList>
    </citation>
    <scope>GLYCOSYLATION AT ASN-182 AND ASN-407</scope>
</reference>
<reference key="8">
    <citation type="journal article" date="2009" name="J. Proteome Res.">
        <title>Glycoproteomics analysis of human liver tissue by combination of multiple enzyme digestion and hydrazide chemistry.</title>
        <authorList>
            <person name="Chen R."/>
            <person name="Jiang X."/>
            <person name="Sun D."/>
            <person name="Han G."/>
            <person name="Wang F."/>
            <person name="Ye M."/>
            <person name="Wang L."/>
            <person name="Zou H."/>
        </authorList>
    </citation>
    <scope>GLYCOSYLATION [LARGE SCALE ANALYSIS] AT ASN-182</scope>
    <source>
        <tissue>Liver</tissue>
    </source>
</reference>
<reference key="9">
    <citation type="journal article" date="2009" name="Sci. Signal.">
        <title>Quantitative phosphoproteomic analysis of T cell receptor signaling reveals system-wide modulation of protein-protein interactions.</title>
        <authorList>
            <person name="Mayya V."/>
            <person name="Lundgren D.H."/>
            <person name="Hwang S.-I."/>
            <person name="Rezaul K."/>
            <person name="Wu L."/>
            <person name="Eng J.K."/>
            <person name="Rodionov V."/>
            <person name="Han D.K."/>
        </authorList>
    </citation>
    <scope>IDENTIFICATION BY MASS SPECTROMETRY [LARGE SCALE ANALYSIS]</scope>
    <source>
        <tissue>Leukemic T-cell</tissue>
    </source>
</reference>
<reference key="10">
    <citation type="journal article" date="2011" name="BMC Syst. Biol.">
        <title>Initial characterization of the human central proteome.</title>
        <authorList>
            <person name="Burkard T.R."/>
            <person name="Planyavsky M."/>
            <person name="Kaupe I."/>
            <person name="Breitwieser F.P."/>
            <person name="Buerckstuemmer T."/>
            <person name="Bennett K.L."/>
            <person name="Superti-Furga G."/>
            <person name="Colinge J."/>
        </authorList>
    </citation>
    <scope>IDENTIFICATION BY MASS SPECTROMETRY [LARGE SCALE ANALYSIS]</scope>
</reference>
<reference key="11">
    <citation type="journal article" date="2010" name="Am. J. Hum. Genet.">
        <title>Mutations in the gene encoding the RER protein FKBP65 cause autosomal-recessive osteogenesis imperfecta.</title>
        <authorList>
            <person name="Alanay Y."/>
            <person name="Avaygan H."/>
            <person name="Camacho N."/>
            <person name="Utine G.E."/>
            <person name="Boduroglu K."/>
            <person name="Aktas D."/>
            <person name="Alikasifoglu M."/>
            <person name="Tuncbilek E."/>
            <person name="Orhan D."/>
            <person name="Bakar F.T."/>
            <person name="Zabel B."/>
            <person name="Superti-Furga A."/>
            <person name="Bruckner-Tuderman L."/>
            <person name="Curry C.J."/>
            <person name="Pyott S."/>
            <person name="Byers P.H."/>
            <person name="Eyre D.R."/>
            <person name="Baldridge D."/>
            <person name="Lee B."/>
            <person name="Merrill A.E."/>
            <person name="Davis E.C."/>
            <person name="Cohn D.H."/>
            <person name="Akarsu N."/>
            <person name="Krakow D."/>
        </authorList>
    </citation>
    <scope>VARIANT OI11 107-MET--LEU-117 DEL</scope>
</reference>
<reference key="12">
    <citation type="journal article" date="2011" name="J. Bone Miner. Res.">
        <title>Mutations in FKBP10 cause recessive osteogenesis imperfecta and Bruck syndrome.</title>
        <authorList>
            <person name="Kelley B.P."/>
            <person name="Malfait F."/>
            <person name="Bonafe L."/>
            <person name="Baldridge D."/>
            <person name="Homan E."/>
            <person name="Symoens S."/>
            <person name="Willaert A."/>
            <person name="Elcioglu N."/>
            <person name="Van Maldergem L."/>
            <person name="Verellen-Dumoulin C."/>
            <person name="Gillerot Y."/>
            <person name="Napierala D."/>
            <person name="Krakow D."/>
            <person name="Beighton P."/>
            <person name="Superti-Furga A."/>
            <person name="De Paepe A."/>
            <person name="Lee B."/>
        </authorList>
    </citation>
    <scope>VARIANT BRKS1 GLN-115</scope>
    <scope>INVOLVEMENT IN OI11</scope>
</reference>
<reference key="13">
    <citation type="journal article" date="2013" name="Hum. Mol. Genet.">
        <title>Mutations in FKBP10, which result in Bruck syndrome and recessive forms of osteogenesis imperfecta, inhibit the hydroxylation of telopeptide lysines in bone collagen.</title>
        <authorList>
            <person name="Schwarze U."/>
            <person name="Cundy T."/>
            <person name="Pyott S.M."/>
            <person name="Christiansen H.E."/>
            <person name="Hegde M.R."/>
            <person name="Bank R.A."/>
            <person name="Pals G."/>
            <person name="Ankala A."/>
            <person name="Conneely K."/>
            <person name="Seaver L."/>
            <person name="Yandow S.M."/>
            <person name="Raney E."/>
            <person name="Babovic-Vuksanovic D."/>
            <person name="Stoler J."/>
            <person name="Ben-Neriah Z."/>
            <person name="Segel R."/>
            <person name="Lieberman S."/>
            <person name="Siderius L."/>
            <person name="Al-Aqeel A."/>
            <person name="Hannibal M."/>
            <person name="Hudgins L."/>
            <person name="McPherson E."/>
            <person name="Clemens M."/>
            <person name="Sussman M.D."/>
            <person name="Steiner R.D."/>
            <person name="Mahan J."/>
            <person name="Smith R."/>
            <person name="Anyane-Yeboa K."/>
            <person name="Wynn J."/>
            <person name="Chong K."/>
            <person name="Uster T."/>
            <person name="Aftimos S."/>
            <person name="Sutton V.R."/>
            <person name="Davis E.C."/>
            <person name="Kim L.S."/>
            <person name="Weis M.A."/>
            <person name="Eyre D."/>
            <person name="Byers P.H."/>
        </authorList>
    </citation>
    <scope>VARIANTS BRKS1 LYS-113; GLN-115 AND LEU-136</scope>
    <scope>INVOLVEMENT IN OI11</scope>
</reference>
<protein>
    <recommendedName>
        <fullName>Peptidyl-prolyl cis-trans isomerase FKBP10</fullName>
        <shortName>PPIase FKBP10</shortName>
        <ecNumber>5.2.1.8</ecNumber>
    </recommendedName>
    <alternativeName>
        <fullName>65 kDa FK506-binding protein</fullName>
        <shortName>65 kDa FKBP</shortName>
        <shortName>FKBP-65</shortName>
    </alternativeName>
    <alternativeName>
        <fullName>FK506-binding protein 10</fullName>
        <shortName>FKBP-10</shortName>
    </alternativeName>
    <alternativeName>
        <fullName>Immunophilin FKBP65</fullName>
    </alternativeName>
    <alternativeName>
        <fullName>Rotamase</fullName>
    </alternativeName>
</protein>
<evidence type="ECO:0000250" key="1"/>
<evidence type="ECO:0000255" key="2"/>
<evidence type="ECO:0000255" key="3">
    <source>
        <dbReference type="PROSITE-ProRule" id="PRU00277"/>
    </source>
</evidence>
<evidence type="ECO:0000255" key="4">
    <source>
        <dbReference type="PROSITE-ProRule" id="PRU00448"/>
    </source>
</evidence>
<evidence type="ECO:0000255" key="5">
    <source>
        <dbReference type="PROSITE-ProRule" id="PRU10138"/>
    </source>
</evidence>
<evidence type="ECO:0000256" key="6">
    <source>
        <dbReference type="SAM" id="MobiDB-lite"/>
    </source>
</evidence>
<evidence type="ECO:0000269" key="7">
    <source>
    </source>
</evidence>
<evidence type="ECO:0000269" key="8">
    <source>
    </source>
</evidence>
<evidence type="ECO:0000269" key="9">
    <source>
    </source>
</evidence>
<evidence type="ECO:0000269" key="10">
    <source>
    </source>
</evidence>
<evidence type="ECO:0000269" key="11">
    <source>
    </source>
</evidence>
<evidence type="ECO:0000303" key="12">
    <source>
    </source>
</evidence>
<evidence type="ECO:0000305" key="13"/>
<name>FKB10_HUMAN</name>
<accession>Q96AY3</accession>
<accession>Q7Z3R4</accession>
<accession>Q9H3N3</accession>
<accession>Q9H6J3</accession>
<accession>Q9H6N5</accession>
<accession>Q9UF89</accession>
<keyword id="KW-0025">Alternative splicing</keyword>
<keyword id="KW-0106">Calcium</keyword>
<keyword id="KW-0225">Disease variant</keyword>
<keyword id="KW-0256">Endoplasmic reticulum</keyword>
<keyword id="KW-0325">Glycoprotein</keyword>
<keyword id="KW-0413">Isomerase</keyword>
<keyword id="KW-0479">Metal-binding</keyword>
<keyword id="KW-1065">Osteogenesis imperfecta</keyword>
<keyword id="KW-0597">Phosphoprotein</keyword>
<keyword id="KW-1267">Proteomics identification</keyword>
<keyword id="KW-1185">Reference proteome</keyword>
<keyword id="KW-0677">Repeat</keyword>
<keyword id="KW-0697">Rotamase</keyword>
<keyword id="KW-0732">Signal</keyword>
<feature type="signal peptide" evidence="2">
    <location>
        <begin position="1"/>
        <end position="26"/>
    </location>
</feature>
<feature type="chain" id="PRO_0000025517" description="Peptidyl-prolyl cis-trans isomerase FKBP10">
    <location>
        <begin position="27"/>
        <end position="582"/>
    </location>
</feature>
<feature type="domain" description="PPIase FKBP-type 1" evidence="3">
    <location>
        <begin position="62"/>
        <end position="150"/>
    </location>
</feature>
<feature type="domain" description="PPIase FKBP-type 2" evidence="3">
    <location>
        <begin position="174"/>
        <end position="262"/>
    </location>
</feature>
<feature type="domain" description="PPIase FKBP-type 3" evidence="3">
    <location>
        <begin position="286"/>
        <end position="374"/>
    </location>
</feature>
<feature type="domain" description="PPIase FKBP-type 4" evidence="3">
    <location>
        <begin position="399"/>
        <end position="486"/>
    </location>
</feature>
<feature type="domain" description="EF-hand 1" evidence="4">
    <location>
        <begin position="497"/>
        <end position="532"/>
    </location>
</feature>
<feature type="domain" description="EF-hand 2" evidence="4">
    <location>
        <begin position="542"/>
        <end position="577"/>
    </location>
</feature>
<feature type="region of interest" description="Disordered" evidence="6">
    <location>
        <begin position="533"/>
        <end position="582"/>
    </location>
</feature>
<feature type="short sequence motif" description="Prevents secretion from ER" evidence="5">
    <location>
        <begin position="579"/>
        <end position="582"/>
    </location>
</feature>
<feature type="compositionally biased region" description="Basic and acidic residues" evidence="6">
    <location>
        <begin position="556"/>
        <end position="582"/>
    </location>
</feature>
<feature type="binding site" evidence="13">
    <location>
        <position position="510"/>
    </location>
    <ligand>
        <name>Ca(2+)</name>
        <dbReference type="ChEBI" id="CHEBI:29108"/>
        <label>1</label>
    </ligand>
</feature>
<feature type="binding site" evidence="13">
    <location>
        <position position="512"/>
    </location>
    <ligand>
        <name>Ca(2+)</name>
        <dbReference type="ChEBI" id="CHEBI:29108"/>
        <label>1</label>
    </ligand>
</feature>
<feature type="binding site" evidence="13">
    <location>
        <position position="514"/>
    </location>
    <ligand>
        <name>Ca(2+)</name>
        <dbReference type="ChEBI" id="CHEBI:29108"/>
        <label>1</label>
    </ligand>
</feature>
<feature type="binding site" evidence="13">
    <location>
        <position position="516"/>
    </location>
    <ligand>
        <name>Ca(2+)</name>
        <dbReference type="ChEBI" id="CHEBI:29108"/>
        <label>1</label>
    </ligand>
</feature>
<feature type="binding site" evidence="13">
    <location>
        <position position="521"/>
    </location>
    <ligand>
        <name>Ca(2+)</name>
        <dbReference type="ChEBI" id="CHEBI:29108"/>
        <label>1</label>
    </ligand>
</feature>
<feature type="binding site" evidence="4">
    <location>
        <position position="555"/>
    </location>
    <ligand>
        <name>Ca(2+)</name>
        <dbReference type="ChEBI" id="CHEBI:29108"/>
        <label>2</label>
    </ligand>
</feature>
<feature type="binding site" evidence="4">
    <location>
        <position position="557"/>
    </location>
    <ligand>
        <name>Ca(2+)</name>
        <dbReference type="ChEBI" id="CHEBI:29108"/>
        <label>2</label>
    </ligand>
</feature>
<feature type="binding site" evidence="4">
    <location>
        <position position="559"/>
    </location>
    <ligand>
        <name>Ca(2+)</name>
        <dbReference type="ChEBI" id="CHEBI:29108"/>
        <label>2</label>
    </ligand>
</feature>
<feature type="binding site" evidence="4">
    <location>
        <position position="561"/>
    </location>
    <ligand>
        <name>Ca(2+)</name>
        <dbReference type="ChEBI" id="CHEBI:29108"/>
        <label>2</label>
    </ligand>
</feature>
<feature type="binding site" evidence="4">
    <location>
        <position position="566"/>
    </location>
    <ligand>
        <name>Ca(2+)</name>
        <dbReference type="ChEBI" id="CHEBI:29108"/>
        <label>2</label>
    </ligand>
</feature>
<feature type="glycosylation site" description="N-linked (GlcNAc...) asparagine" evidence="2">
    <location>
        <position position="70"/>
    </location>
</feature>
<feature type="glycosylation site" description="N-linked (GlcNAc...) asparagine" evidence="7 8">
    <location>
        <position position="182"/>
    </location>
</feature>
<feature type="glycosylation site" description="N-linked (GlcNAc...) asparagine" evidence="2">
    <location>
        <position position="294"/>
    </location>
</feature>
<feature type="glycosylation site" description="N-linked (GlcNAc...) asparagine" evidence="2">
    <location>
        <position position="310"/>
    </location>
</feature>
<feature type="glycosylation site" description="N-linked (GlcNAc...) asparagine" evidence="2">
    <location>
        <position position="352"/>
    </location>
</feature>
<feature type="glycosylation site" description="N-linked (GlcNAc...) asparagine" evidence="2">
    <location>
        <position position="393"/>
    </location>
</feature>
<feature type="glycosylation site" description="N-linked (GlcNAc...) asparagine" evidence="7">
    <location>
        <position position="407"/>
    </location>
</feature>
<feature type="splice variant" id="VSP_056425" description="In isoform 2." evidence="12">
    <location>
        <begin position="2"/>
        <end position="177"/>
    </location>
</feature>
<feature type="splice variant" id="VSP_056426" description="In isoform 2." evidence="12">
    <original>TLLDGTSFDTSYSKGGTYDTYVGSGWLIK</original>
    <variation>SLMDGTLFDSSYSRNHTYNTYIGQGYIIP</variation>
    <location>
        <begin position="184"/>
        <end position="212"/>
    </location>
</feature>
<feature type="splice variant" id="VSP_056427" description="In isoform 2." evidence="12">
    <original>LGMCPGERRKIIIPPFLAYGEKGYGTVIPPQASLVFHVLLIDVHNPKDAVQLETLELPPGCVRRAGAGDFMRYHYNGSLMDGTLF</original>
    <variation>QGACMGERRRITIPPHLAYGENGTDSIGFLQGSAPLRPFRSGEGQPSLGREGGYGKTEPAYPQDPAVLGASVSSPVKWASHADPQ</variation>
    <location>
        <begin position="219"/>
        <end position="303"/>
    </location>
</feature>
<feature type="splice variant" id="VSP_056428" description="In isoform 2." evidence="12">
    <location>
        <begin position="304"/>
        <end position="354"/>
    </location>
</feature>
<feature type="sequence variant" id="VAR_063601" description="In OI11." evidence="9">
    <location>
        <begin position="107"/>
        <end position="117"/>
    </location>
</feature>
<feature type="sequence variant" id="VAR_069902" description="In BRKS1; dbSNP:rs397514674." evidence="11">
    <original>E</original>
    <variation>K</variation>
    <location>
        <position position="113"/>
    </location>
</feature>
<feature type="sequence variant" id="VAR_069903" description="In BRKS1; dbSNP:rs387906960." evidence="10 11">
    <original>R</original>
    <variation>Q</variation>
    <location>
        <position position="115"/>
    </location>
</feature>
<feature type="sequence variant" id="VAR_069904" description="In BRKS1; dbSNP:rs782653042." evidence="11">
    <original>P</original>
    <variation>L</variation>
    <location>
        <position position="136"/>
    </location>
</feature>
<feature type="sequence variant" id="VAR_050625" description="In dbSNP:rs34764749.">
    <original>K</original>
    <variation>R</variation>
    <location>
        <position position="197"/>
    </location>
</feature>
<feature type="sequence conflict" description="In Ref. 3; BAB20974." evidence="13" ref="3">
    <original>S</original>
    <variation>F</variation>
    <location>
        <position position="190"/>
    </location>
</feature>
<feature type="sequence conflict" description="In Ref. 4; CAD97695." evidence="13" ref="4">
    <original>V</original>
    <variation>L</variation>
    <location>
        <position position="456"/>
    </location>
</feature>
<proteinExistence type="evidence at protein level"/>
<organism>
    <name type="scientific">Homo sapiens</name>
    <name type="common">Human</name>
    <dbReference type="NCBI Taxonomy" id="9606"/>
    <lineage>
        <taxon>Eukaryota</taxon>
        <taxon>Metazoa</taxon>
        <taxon>Chordata</taxon>
        <taxon>Craniata</taxon>
        <taxon>Vertebrata</taxon>
        <taxon>Euteleostomi</taxon>
        <taxon>Mammalia</taxon>
        <taxon>Eutheria</taxon>
        <taxon>Euarchontoglires</taxon>
        <taxon>Primates</taxon>
        <taxon>Haplorrhini</taxon>
        <taxon>Catarrhini</taxon>
        <taxon>Hominidae</taxon>
        <taxon>Homo</taxon>
    </lineage>
</organism>
<comment type="function">
    <text>PPIases accelerate the folding of proteins during protein synthesis.</text>
</comment>
<comment type="catalytic activity">
    <reaction>
        <text>[protein]-peptidylproline (omega=180) = [protein]-peptidylproline (omega=0)</text>
        <dbReference type="Rhea" id="RHEA:16237"/>
        <dbReference type="Rhea" id="RHEA-COMP:10747"/>
        <dbReference type="Rhea" id="RHEA-COMP:10748"/>
        <dbReference type="ChEBI" id="CHEBI:83833"/>
        <dbReference type="ChEBI" id="CHEBI:83834"/>
        <dbReference type="EC" id="5.2.1.8"/>
    </reaction>
</comment>
<comment type="activity regulation">
    <text evidence="1">Inhibited by both FK506 and rapamycin, but not by cyclosporin A.</text>
</comment>
<comment type="interaction">
    <interactant intactId="EBI-2372475">
        <id>Q96AY3</id>
    </interactant>
    <interactant intactId="EBI-5235340">
        <id>Q7Z699</id>
        <label>SPRED1</label>
    </interactant>
    <organismsDiffer>false</organismsDiffer>
    <experiments>3</experiments>
</comment>
<comment type="subcellular location">
    <subcellularLocation>
        <location evidence="5">Endoplasmic reticulum lumen</location>
    </subcellularLocation>
</comment>
<comment type="alternative products">
    <event type="alternative splicing"/>
    <isoform>
        <id>Q96AY3-1</id>
        <name>1</name>
        <sequence type="displayed"/>
    </isoform>
    <isoform>
        <id>Q96AY3-2</id>
        <name>2</name>
        <sequence type="described" ref="VSP_056425 VSP_056426 VSP_056427 VSP_056428"/>
    </isoform>
</comment>
<comment type="PTM">
    <text evidence="1">Glycosylated and phosphorylated.</text>
</comment>
<comment type="disease" evidence="9 10 11">
    <disease id="DI-03069">
        <name>Osteogenesis imperfecta 11</name>
        <acronym>OI11</acronym>
        <description>A form of osteogenesis imperfecta, a disorder of bone formation characterized by low bone mass, bone fragility and susceptibility to fractures after minimal trauma. Disease severity ranges from very mild forms without fractures to intrauterine fractures and perinatal lethality. Extraskeletal manifestations, which affect a variable number of patients, are dentinogenesis imperfecta, hearing loss, and blue sclerae. OI11 is an autosomal recessive form.</description>
        <dbReference type="MIM" id="610968"/>
    </disease>
    <text>The disease is caused by variants affecting the gene represented in this entry.</text>
</comment>
<comment type="disease" evidence="10 11">
    <disease id="DI-03760">
        <name>Bruck syndrome 1</name>
        <acronym>BRKS1</acronym>
        <description>A disease characterized by generalized osteopenia, congenital joint contractures, fragile bones with onset of fractures in infancy or early childhood, short stature, severe limb deformity, progressive scoliosis, and pterygia.</description>
        <dbReference type="MIM" id="259450"/>
    </disease>
    <text>The disease is caused by variants affecting the gene represented in this entry.</text>
</comment>
<comment type="sequence caution" evidence="13">
    <conflict type="erroneous initiation">
        <sequence resource="EMBL-CDS" id="BAB15220"/>
    </conflict>
    <text>Truncated N-terminus.</text>
</comment>
<comment type="sequence caution" evidence="13">
    <conflict type="erroneous initiation">
        <sequence resource="EMBL-CDS" id="CAD97695"/>
    </conflict>
    <text>Extended N-terminus.</text>
</comment>
<comment type="online information" name="Osteogenesis imperfecta variant database">
    <link uri="https://www.LOVD.nl/FKBP10"/>
    <text>The FKBP10 gene homepage</text>
</comment>
<sequence>MFPAGPPSHSLLRLPLLQLLLLVVQAVGRGLGRASPAGGPLEDVVIERYHIPRACPREVQMGDFVRYHYNGTFEDGKKFDSSYDRNTLVAIVVGVGRLITGMDRGLMGMCVNERRRLIVPPHLGYGSIGLAGLIPPDATLYFDVVLLDVWNKEDTVQVSTLLRPPHCPRMVQDGDFVRYHYNGTLLDGTSFDTSYSKGGTYDTYVGSGWLIKGMDQGLLGMCPGERRKIIIPPFLAYGEKGYGTVIPPQASLVFHVLLIDVHNPKDAVQLETLELPPGCVRRAGAGDFMRYHYNGSLMDGTLFDSSYSRNHTYNTYIGQGYIIPGMDQGLQGACMGERRRITIPPHLAYGENGTGDKIPGSAVLIFNVHVIDFHNPADVVEIRTLSRPSETCNETTKLGDFVRYHYNCSLLDGTQLFTSHDYGAPQEATLGANKVIEGLDTGLQGMCVGERRQLIVPPHLAHGESGARGVPGSAVLLFEVELVSREDGLPTGYLFVWHKDPPANLFEDMDLNKDGEVPPEEFSTFIKAQVSEGKGRLMPGQDPEKTIGDMFQNQDRNQDGKITVDELKLKSDEDEERVHEEL</sequence>